<organism>
    <name type="scientific">Candida glabrata (strain ATCC 2001 / BCRC 20586 / JCM 3761 / NBRC 0622 / NRRL Y-65 / CBS 138)</name>
    <name type="common">Yeast</name>
    <name type="synonym">Nakaseomyces glabratus</name>
    <dbReference type="NCBI Taxonomy" id="284593"/>
    <lineage>
        <taxon>Eukaryota</taxon>
        <taxon>Fungi</taxon>
        <taxon>Dikarya</taxon>
        <taxon>Ascomycota</taxon>
        <taxon>Saccharomycotina</taxon>
        <taxon>Saccharomycetes</taxon>
        <taxon>Saccharomycetales</taxon>
        <taxon>Saccharomycetaceae</taxon>
        <taxon>Nakaseomyces</taxon>
    </lineage>
</organism>
<evidence type="ECO:0000250" key="1"/>
<evidence type="ECO:0000305" key="2"/>
<sequence length="180" mass="20965">MPPFIPKSRSNAVESVYLHGWVRDMLLESKTSQNIAVIPRVDPDEASIPLLSRRIYANRRHFVKITKFFQVHNYSVYASVKDSQHQILSQFTPKCVSEFESRNRSRITSDTVNTLFMIGDAKLGIMVVDELRHYFGEKIVSLFNGLDMPYIPYLIINQAFILDYDQVEAFKMTPFVYQYI</sequence>
<name>EST3_CANGA</name>
<comment type="function">
    <text evidence="1">Component of the telomerase complex involved in telomere replication. Stimulates RNA/DNA heteroduplex unwinding which favors the telomere replication by the telomerase (By similarity).</text>
</comment>
<comment type="subunit">
    <text evidence="1">Component of the telomerase complex.</text>
</comment>
<comment type="subcellular location">
    <subcellularLocation>
        <location evidence="2">Nucleus</location>
    </subcellularLocation>
    <subcellularLocation>
        <location evidence="2">Chromosome</location>
        <location evidence="2">Telomere</location>
    </subcellularLocation>
</comment>
<comment type="similarity">
    <text evidence="2">Belongs to the EST3 family.</text>
</comment>
<dbReference type="EMBL" id="CR380949">
    <property type="protein sequence ID" value="CAG58248.1"/>
    <property type="molecule type" value="Genomic_DNA"/>
</dbReference>
<dbReference type="RefSeq" id="XP_445342.1">
    <property type="nucleotide sequence ID" value="XM_445342.1"/>
</dbReference>
<dbReference type="SMR" id="Q6FWQ2"/>
<dbReference type="FunCoup" id="Q6FWQ2">
    <property type="interactions" value="51"/>
</dbReference>
<dbReference type="STRING" id="284593.Q6FWQ2"/>
<dbReference type="EnsemblFungi" id="CAGL0C03828g-T">
    <property type="protein sequence ID" value="CAGL0C03828g-T-p1"/>
    <property type="gene ID" value="CAGL0C03828g"/>
</dbReference>
<dbReference type="VEuPathDB" id="FungiDB:CAGL0C03828g"/>
<dbReference type="eggNOG" id="ENOG502S5B8">
    <property type="taxonomic scope" value="Eukaryota"/>
</dbReference>
<dbReference type="HOGENOM" id="CLU_1489823_0_0_1"/>
<dbReference type="InParanoid" id="Q6FWQ2"/>
<dbReference type="OMA" id="NCRITSE"/>
<dbReference type="Proteomes" id="UP000002428">
    <property type="component" value="Chromosome C"/>
</dbReference>
<dbReference type="GO" id="GO:0000781">
    <property type="term" value="C:chromosome, telomeric region"/>
    <property type="evidence" value="ECO:0007669"/>
    <property type="project" value="UniProtKB-SubCell"/>
</dbReference>
<dbReference type="GO" id="GO:0005697">
    <property type="term" value="C:telomerase holoenzyme complex"/>
    <property type="evidence" value="ECO:0007669"/>
    <property type="project" value="EnsemblFungi"/>
</dbReference>
<dbReference type="GO" id="GO:0033677">
    <property type="term" value="F:DNA/RNA helicase activity"/>
    <property type="evidence" value="ECO:0007669"/>
    <property type="project" value="EnsemblFungi"/>
</dbReference>
<dbReference type="GO" id="GO:0003924">
    <property type="term" value="F:GTPase activity"/>
    <property type="evidence" value="ECO:0007669"/>
    <property type="project" value="EnsemblFungi"/>
</dbReference>
<dbReference type="GO" id="GO:0042162">
    <property type="term" value="F:telomeric DNA binding"/>
    <property type="evidence" value="ECO:0007669"/>
    <property type="project" value="EnsemblFungi"/>
</dbReference>
<dbReference type="GO" id="GO:0007004">
    <property type="term" value="P:telomere maintenance via telomerase"/>
    <property type="evidence" value="ECO:0007669"/>
    <property type="project" value="EnsemblFungi"/>
</dbReference>
<dbReference type="Gene3D" id="2.40.50.960">
    <property type="match status" value="1"/>
</dbReference>
<dbReference type="InterPro" id="IPR019437">
    <property type="entry name" value="TPP1/Est3"/>
</dbReference>
<dbReference type="Pfam" id="PF10341">
    <property type="entry name" value="TPP1"/>
    <property type="match status" value="1"/>
</dbReference>
<gene>
    <name type="primary">EST3</name>
    <name type="ordered locus">CAGL0C03828g</name>
</gene>
<keyword id="KW-0158">Chromosome</keyword>
<keyword id="KW-0539">Nucleus</keyword>
<keyword id="KW-1185">Reference proteome</keyword>
<keyword id="KW-0779">Telomere</keyword>
<accession>Q6FWQ2</accession>
<reference key="1">
    <citation type="journal article" date="2004" name="Nature">
        <title>Genome evolution in yeasts.</title>
        <authorList>
            <person name="Dujon B."/>
            <person name="Sherman D."/>
            <person name="Fischer G."/>
            <person name="Durrens P."/>
            <person name="Casaregola S."/>
            <person name="Lafontaine I."/>
            <person name="de Montigny J."/>
            <person name="Marck C."/>
            <person name="Neuveglise C."/>
            <person name="Talla E."/>
            <person name="Goffard N."/>
            <person name="Frangeul L."/>
            <person name="Aigle M."/>
            <person name="Anthouard V."/>
            <person name="Babour A."/>
            <person name="Barbe V."/>
            <person name="Barnay S."/>
            <person name="Blanchin S."/>
            <person name="Beckerich J.-M."/>
            <person name="Beyne E."/>
            <person name="Bleykasten C."/>
            <person name="Boisrame A."/>
            <person name="Boyer J."/>
            <person name="Cattolico L."/>
            <person name="Confanioleri F."/>
            <person name="de Daruvar A."/>
            <person name="Despons L."/>
            <person name="Fabre E."/>
            <person name="Fairhead C."/>
            <person name="Ferry-Dumazet H."/>
            <person name="Groppi A."/>
            <person name="Hantraye F."/>
            <person name="Hennequin C."/>
            <person name="Jauniaux N."/>
            <person name="Joyet P."/>
            <person name="Kachouri R."/>
            <person name="Kerrest A."/>
            <person name="Koszul R."/>
            <person name="Lemaire M."/>
            <person name="Lesur I."/>
            <person name="Ma L."/>
            <person name="Muller H."/>
            <person name="Nicaud J.-M."/>
            <person name="Nikolski M."/>
            <person name="Oztas S."/>
            <person name="Ozier-Kalogeropoulos O."/>
            <person name="Pellenz S."/>
            <person name="Potier S."/>
            <person name="Richard G.-F."/>
            <person name="Straub M.-L."/>
            <person name="Suleau A."/>
            <person name="Swennen D."/>
            <person name="Tekaia F."/>
            <person name="Wesolowski-Louvel M."/>
            <person name="Westhof E."/>
            <person name="Wirth B."/>
            <person name="Zeniou-Meyer M."/>
            <person name="Zivanovic Y."/>
            <person name="Bolotin-Fukuhara M."/>
            <person name="Thierry A."/>
            <person name="Bouchier C."/>
            <person name="Caudron B."/>
            <person name="Scarpelli C."/>
            <person name="Gaillardin C."/>
            <person name="Weissenbach J."/>
            <person name="Wincker P."/>
            <person name="Souciet J.-L."/>
        </authorList>
    </citation>
    <scope>NUCLEOTIDE SEQUENCE [LARGE SCALE GENOMIC DNA]</scope>
    <source>
        <strain>ATCC 2001 / BCRC 20586 / JCM 3761 / NBRC 0622 / NRRL Y-65 / CBS 138</strain>
    </source>
</reference>
<feature type="chain" id="PRO_0000301752" description="Telomere replication protein EST3">
    <location>
        <begin position="1"/>
        <end position="180"/>
    </location>
</feature>
<protein>
    <recommendedName>
        <fullName>Telomere replication protein EST3</fullName>
    </recommendedName>
</protein>
<proteinExistence type="inferred from homology"/>